<protein>
    <recommendedName>
        <fullName>Transcription cofactor vestigial-like protein 2</fullName>
        <shortName>Vgl-2</shortName>
    </recommendedName>
    <alternativeName>
        <fullName>Protein VITO1</fullName>
    </alternativeName>
</protein>
<accession>Q8N8G2</accession>
<accession>Q8WWX1</accession>
<evidence type="ECO:0000250" key="1"/>
<evidence type="ECO:0000256" key="2">
    <source>
        <dbReference type="SAM" id="MobiDB-lite"/>
    </source>
</evidence>
<evidence type="ECO:0000269" key="3">
    <source>
    </source>
</evidence>
<evidence type="ECO:0000303" key="4">
    <source>
    </source>
</evidence>
<evidence type="ECO:0000303" key="5">
    <source>
    </source>
</evidence>
<evidence type="ECO:0000305" key="6"/>
<gene>
    <name type="primary">VGLL2</name>
    <name type="synonym">VITO1</name>
</gene>
<reference key="1">
    <citation type="journal article" date="2002" name="Gene Expr. Patterns">
        <title>VITO-1, a novel vestigial related protein is predominantly expressed in the skeletal muscle lineage.</title>
        <authorList>
            <person name="Mielcarek M."/>
            <person name="Gunther S."/>
            <person name="Kruger M."/>
            <person name="Braun T."/>
        </authorList>
    </citation>
    <scope>NUCLEOTIDE SEQUENCE [MRNA] (ISOFORM 1)</scope>
    <scope>TISSUE SPECIFICITY</scope>
</reference>
<reference key="2">
    <citation type="journal article" date="2002" name="J. Biol. Chem.">
        <title>Mammalian vestigial-like 2, a cofactor of TEF-1 and MEF2 transcription factors that promotes skeletal muscle differentiation.</title>
        <authorList>
            <person name="Maeda T."/>
            <person name="Chapman D.L."/>
            <person name="Stewart A.F.R."/>
        </authorList>
    </citation>
    <scope>NUCLEOTIDE SEQUENCE [MRNA] (ISOFORM 2)</scope>
</reference>
<reference key="3">
    <citation type="journal article" date="2004" name="Nat. Genet.">
        <title>Complete sequencing and characterization of 21,243 full-length human cDNAs.</title>
        <authorList>
            <person name="Ota T."/>
            <person name="Suzuki Y."/>
            <person name="Nishikawa T."/>
            <person name="Otsuki T."/>
            <person name="Sugiyama T."/>
            <person name="Irie R."/>
            <person name="Wakamatsu A."/>
            <person name="Hayashi K."/>
            <person name="Sato H."/>
            <person name="Nagai K."/>
            <person name="Kimura K."/>
            <person name="Makita H."/>
            <person name="Sekine M."/>
            <person name="Obayashi M."/>
            <person name="Nishi T."/>
            <person name="Shibahara T."/>
            <person name="Tanaka T."/>
            <person name="Ishii S."/>
            <person name="Yamamoto J."/>
            <person name="Saito K."/>
            <person name="Kawai Y."/>
            <person name="Isono Y."/>
            <person name="Nakamura Y."/>
            <person name="Nagahari K."/>
            <person name="Murakami K."/>
            <person name="Yasuda T."/>
            <person name="Iwayanagi T."/>
            <person name="Wagatsuma M."/>
            <person name="Shiratori A."/>
            <person name="Sudo H."/>
            <person name="Hosoiri T."/>
            <person name="Kaku Y."/>
            <person name="Kodaira H."/>
            <person name="Kondo H."/>
            <person name="Sugawara M."/>
            <person name="Takahashi M."/>
            <person name="Kanda K."/>
            <person name="Yokoi T."/>
            <person name="Furuya T."/>
            <person name="Kikkawa E."/>
            <person name="Omura Y."/>
            <person name="Abe K."/>
            <person name="Kamihara K."/>
            <person name="Katsuta N."/>
            <person name="Sato K."/>
            <person name="Tanikawa M."/>
            <person name="Yamazaki M."/>
            <person name="Ninomiya K."/>
            <person name="Ishibashi T."/>
            <person name="Yamashita H."/>
            <person name="Murakawa K."/>
            <person name="Fujimori K."/>
            <person name="Tanai H."/>
            <person name="Kimata M."/>
            <person name="Watanabe M."/>
            <person name="Hiraoka S."/>
            <person name="Chiba Y."/>
            <person name="Ishida S."/>
            <person name="Ono Y."/>
            <person name="Takiguchi S."/>
            <person name="Watanabe S."/>
            <person name="Yosida M."/>
            <person name="Hotuta T."/>
            <person name="Kusano J."/>
            <person name="Kanehori K."/>
            <person name="Takahashi-Fujii A."/>
            <person name="Hara H."/>
            <person name="Tanase T.-O."/>
            <person name="Nomura Y."/>
            <person name="Togiya S."/>
            <person name="Komai F."/>
            <person name="Hara R."/>
            <person name="Takeuchi K."/>
            <person name="Arita M."/>
            <person name="Imose N."/>
            <person name="Musashino K."/>
            <person name="Yuuki H."/>
            <person name="Oshima A."/>
            <person name="Sasaki N."/>
            <person name="Aotsuka S."/>
            <person name="Yoshikawa Y."/>
            <person name="Matsunawa H."/>
            <person name="Ichihara T."/>
            <person name="Shiohata N."/>
            <person name="Sano S."/>
            <person name="Moriya S."/>
            <person name="Momiyama H."/>
            <person name="Satoh N."/>
            <person name="Takami S."/>
            <person name="Terashima Y."/>
            <person name="Suzuki O."/>
            <person name="Nakagawa S."/>
            <person name="Senoh A."/>
            <person name="Mizoguchi H."/>
            <person name="Goto Y."/>
            <person name="Shimizu F."/>
            <person name="Wakebe H."/>
            <person name="Hishigaki H."/>
            <person name="Watanabe T."/>
            <person name="Sugiyama A."/>
            <person name="Takemoto M."/>
            <person name="Kawakami B."/>
            <person name="Yamazaki M."/>
            <person name="Watanabe K."/>
            <person name="Kumagai A."/>
            <person name="Itakura S."/>
            <person name="Fukuzumi Y."/>
            <person name="Fujimori Y."/>
            <person name="Komiyama M."/>
            <person name="Tashiro H."/>
            <person name="Tanigami A."/>
            <person name="Fujiwara T."/>
            <person name="Ono T."/>
            <person name="Yamada K."/>
            <person name="Fujii Y."/>
            <person name="Ozaki K."/>
            <person name="Hirao M."/>
            <person name="Ohmori Y."/>
            <person name="Kawabata A."/>
            <person name="Hikiji T."/>
            <person name="Kobatake N."/>
            <person name="Inagaki H."/>
            <person name="Ikema Y."/>
            <person name="Okamoto S."/>
            <person name="Okitani R."/>
            <person name="Kawakami T."/>
            <person name="Noguchi S."/>
            <person name="Itoh T."/>
            <person name="Shigeta K."/>
            <person name="Senba T."/>
            <person name="Matsumura K."/>
            <person name="Nakajima Y."/>
            <person name="Mizuno T."/>
            <person name="Morinaga M."/>
            <person name="Sasaki M."/>
            <person name="Togashi T."/>
            <person name="Oyama M."/>
            <person name="Hata H."/>
            <person name="Watanabe M."/>
            <person name="Komatsu T."/>
            <person name="Mizushima-Sugano J."/>
            <person name="Satoh T."/>
            <person name="Shirai Y."/>
            <person name="Takahashi Y."/>
            <person name="Nakagawa K."/>
            <person name="Okumura K."/>
            <person name="Nagase T."/>
            <person name="Nomura N."/>
            <person name="Kikuchi H."/>
            <person name="Masuho Y."/>
            <person name="Yamashita R."/>
            <person name="Nakai K."/>
            <person name="Yada T."/>
            <person name="Nakamura Y."/>
            <person name="Ohara O."/>
            <person name="Isogai T."/>
            <person name="Sugano S."/>
        </authorList>
    </citation>
    <scope>NUCLEOTIDE SEQUENCE [LARGE SCALE MRNA] (ISOFORM 1)</scope>
    <source>
        <tissue>Skeletal muscle</tissue>
    </source>
</reference>
<reference key="4">
    <citation type="journal article" date="2003" name="Nature">
        <title>The DNA sequence and analysis of human chromosome 6.</title>
        <authorList>
            <person name="Mungall A.J."/>
            <person name="Palmer S.A."/>
            <person name="Sims S.K."/>
            <person name="Edwards C.A."/>
            <person name="Ashurst J.L."/>
            <person name="Wilming L."/>
            <person name="Jones M.C."/>
            <person name="Horton R."/>
            <person name="Hunt S.E."/>
            <person name="Scott C.E."/>
            <person name="Gilbert J.G.R."/>
            <person name="Clamp M.E."/>
            <person name="Bethel G."/>
            <person name="Milne S."/>
            <person name="Ainscough R."/>
            <person name="Almeida J.P."/>
            <person name="Ambrose K.D."/>
            <person name="Andrews T.D."/>
            <person name="Ashwell R.I.S."/>
            <person name="Babbage A.K."/>
            <person name="Bagguley C.L."/>
            <person name="Bailey J."/>
            <person name="Banerjee R."/>
            <person name="Barker D.J."/>
            <person name="Barlow K.F."/>
            <person name="Bates K."/>
            <person name="Beare D.M."/>
            <person name="Beasley H."/>
            <person name="Beasley O."/>
            <person name="Bird C.P."/>
            <person name="Blakey S.E."/>
            <person name="Bray-Allen S."/>
            <person name="Brook J."/>
            <person name="Brown A.J."/>
            <person name="Brown J.Y."/>
            <person name="Burford D.C."/>
            <person name="Burrill W."/>
            <person name="Burton J."/>
            <person name="Carder C."/>
            <person name="Carter N.P."/>
            <person name="Chapman J.C."/>
            <person name="Clark S.Y."/>
            <person name="Clark G."/>
            <person name="Clee C.M."/>
            <person name="Clegg S."/>
            <person name="Cobley V."/>
            <person name="Collier R.E."/>
            <person name="Collins J.E."/>
            <person name="Colman L.K."/>
            <person name="Corby N.R."/>
            <person name="Coville G.J."/>
            <person name="Culley K.M."/>
            <person name="Dhami P."/>
            <person name="Davies J."/>
            <person name="Dunn M."/>
            <person name="Earthrowl M.E."/>
            <person name="Ellington A.E."/>
            <person name="Evans K.A."/>
            <person name="Faulkner L."/>
            <person name="Francis M.D."/>
            <person name="Frankish A."/>
            <person name="Frankland J."/>
            <person name="French L."/>
            <person name="Garner P."/>
            <person name="Garnett J."/>
            <person name="Ghori M.J."/>
            <person name="Gilby L.M."/>
            <person name="Gillson C.J."/>
            <person name="Glithero R.J."/>
            <person name="Grafham D.V."/>
            <person name="Grant M."/>
            <person name="Gribble S."/>
            <person name="Griffiths C."/>
            <person name="Griffiths M.N.D."/>
            <person name="Hall R."/>
            <person name="Halls K.S."/>
            <person name="Hammond S."/>
            <person name="Harley J.L."/>
            <person name="Hart E.A."/>
            <person name="Heath P.D."/>
            <person name="Heathcott R."/>
            <person name="Holmes S.J."/>
            <person name="Howden P.J."/>
            <person name="Howe K.L."/>
            <person name="Howell G.R."/>
            <person name="Huckle E."/>
            <person name="Humphray S.J."/>
            <person name="Humphries M.D."/>
            <person name="Hunt A.R."/>
            <person name="Johnson C.M."/>
            <person name="Joy A.A."/>
            <person name="Kay M."/>
            <person name="Keenan S.J."/>
            <person name="Kimberley A.M."/>
            <person name="King A."/>
            <person name="Laird G.K."/>
            <person name="Langford C."/>
            <person name="Lawlor S."/>
            <person name="Leongamornlert D.A."/>
            <person name="Leversha M."/>
            <person name="Lloyd C.R."/>
            <person name="Lloyd D.M."/>
            <person name="Loveland J.E."/>
            <person name="Lovell J."/>
            <person name="Martin S."/>
            <person name="Mashreghi-Mohammadi M."/>
            <person name="Maslen G.L."/>
            <person name="Matthews L."/>
            <person name="McCann O.T."/>
            <person name="McLaren S.J."/>
            <person name="McLay K."/>
            <person name="McMurray A."/>
            <person name="Moore M.J.F."/>
            <person name="Mullikin J.C."/>
            <person name="Niblett D."/>
            <person name="Nickerson T."/>
            <person name="Novik K.L."/>
            <person name="Oliver K."/>
            <person name="Overton-Larty E.K."/>
            <person name="Parker A."/>
            <person name="Patel R."/>
            <person name="Pearce A.V."/>
            <person name="Peck A.I."/>
            <person name="Phillimore B.J.C.T."/>
            <person name="Phillips S."/>
            <person name="Plumb R.W."/>
            <person name="Porter K.M."/>
            <person name="Ramsey Y."/>
            <person name="Ranby S.A."/>
            <person name="Rice C.M."/>
            <person name="Ross M.T."/>
            <person name="Searle S.M."/>
            <person name="Sehra H.K."/>
            <person name="Sheridan E."/>
            <person name="Skuce C.D."/>
            <person name="Smith S."/>
            <person name="Smith M."/>
            <person name="Spraggon L."/>
            <person name="Squares S.L."/>
            <person name="Steward C.A."/>
            <person name="Sycamore N."/>
            <person name="Tamlyn-Hall G."/>
            <person name="Tester J."/>
            <person name="Theaker A.J."/>
            <person name="Thomas D.W."/>
            <person name="Thorpe A."/>
            <person name="Tracey A."/>
            <person name="Tromans A."/>
            <person name="Tubby B."/>
            <person name="Wall M."/>
            <person name="Wallis J.M."/>
            <person name="West A.P."/>
            <person name="White S.S."/>
            <person name="Whitehead S.L."/>
            <person name="Whittaker H."/>
            <person name="Wild A."/>
            <person name="Willey D.J."/>
            <person name="Wilmer T.E."/>
            <person name="Wood J.M."/>
            <person name="Wray P.W."/>
            <person name="Wyatt J.C."/>
            <person name="Young L."/>
            <person name="Younger R.M."/>
            <person name="Bentley D.R."/>
            <person name="Coulson A."/>
            <person name="Durbin R.M."/>
            <person name="Hubbard T."/>
            <person name="Sulston J.E."/>
            <person name="Dunham I."/>
            <person name="Rogers J."/>
            <person name="Beck S."/>
        </authorList>
    </citation>
    <scope>NUCLEOTIDE SEQUENCE [LARGE SCALE GENOMIC DNA]</scope>
</reference>
<reference key="5">
    <citation type="submission" date="2005-09" db="EMBL/GenBank/DDBJ databases">
        <authorList>
            <person name="Mural R.J."/>
            <person name="Istrail S."/>
            <person name="Sutton G.G."/>
            <person name="Florea L."/>
            <person name="Halpern A.L."/>
            <person name="Mobarry C.M."/>
            <person name="Lippert R."/>
            <person name="Walenz B."/>
            <person name="Shatkay H."/>
            <person name="Dew I."/>
            <person name="Miller J.R."/>
            <person name="Flanigan M.J."/>
            <person name="Edwards N.J."/>
            <person name="Bolanos R."/>
            <person name="Fasulo D."/>
            <person name="Halldorsson B.V."/>
            <person name="Hannenhalli S."/>
            <person name="Turner R."/>
            <person name="Yooseph S."/>
            <person name="Lu F."/>
            <person name="Nusskern D.R."/>
            <person name="Shue B.C."/>
            <person name="Zheng X.H."/>
            <person name="Zhong F."/>
            <person name="Delcher A.L."/>
            <person name="Huson D.H."/>
            <person name="Kravitz S.A."/>
            <person name="Mouchard L."/>
            <person name="Reinert K."/>
            <person name="Remington K.A."/>
            <person name="Clark A.G."/>
            <person name="Waterman M.S."/>
            <person name="Eichler E.E."/>
            <person name="Adams M.D."/>
            <person name="Hunkapiller M.W."/>
            <person name="Myers E.W."/>
            <person name="Venter J.C."/>
        </authorList>
    </citation>
    <scope>NUCLEOTIDE SEQUENCE [LARGE SCALE GENOMIC DNA]</scope>
</reference>
<reference key="6">
    <citation type="journal article" date="2004" name="Genome Res.">
        <title>The status, quality, and expansion of the NIH full-length cDNA project: the Mammalian Gene Collection (MGC).</title>
        <authorList>
            <consortium name="The MGC Project Team"/>
        </authorList>
    </citation>
    <scope>NUCLEOTIDE SEQUENCE [LARGE SCALE MRNA] (ISOFORM 2)</scope>
</reference>
<proteinExistence type="evidence at protein level"/>
<comment type="function">
    <text>May act as a specific coactivator for the mammalian TEFs. May play a role in the development of skeletal muscles.</text>
</comment>
<comment type="subunit">
    <text>Interacts with TEFs. Binds to TEAD1/TEF1.</text>
</comment>
<comment type="interaction">
    <interactant intactId="EBI-10267981">
        <id>Q8N8G2</id>
    </interactant>
    <interactant intactId="EBI-746720">
        <id>Q99594</id>
        <label>TEAD3</label>
    </interactant>
    <organismsDiffer>false</organismsDiffer>
    <experiments>3</experiments>
</comment>
<comment type="subcellular location">
    <subcellularLocation>
        <location evidence="1">Nucleus</location>
    </subcellularLocation>
</comment>
<comment type="alternative products">
    <event type="alternative splicing"/>
    <isoform>
        <id>Q8N8G2-1</id>
        <name>1</name>
        <sequence type="displayed"/>
    </isoform>
    <isoform>
        <id>Q8N8G2-2</id>
        <name>2</name>
        <sequence type="described" ref="VSP_032166"/>
    </isoform>
</comment>
<comment type="tissue specificity">
    <text evidence="3">Skeletal muscle.</text>
</comment>
<comment type="similarity">
    <text evidence="6">Belongs to the vestigial family.</text>
</comment>
<organism>
    <name type="scientific">Homo sapiens</name>
    <name type="common">Human</name>
    <dbReference type="NCBI Taxonomy" id="9606"/>
    <lineage>
        <taxon>Eukaryota</taxon>
        <taxon>Metazoa</taxon>
        <taxon>Chordata</taxon>
        <taxon>Craniata</taxon>
        <taxon>Vertebrata</taxon>
        <taxon>Euteleostomi</taxon>
        <taxon>Mammalia</taxon>
        <taxon>Eutheria</taxon>
        <taxon>Euarchontoglires</taxon>
        <taxon>Primates</taxon>
        <taxon>Haplorrhini</taxon>
        <taxon>Catarrhini</taxon>
        <taxon>Hominidae</taxon>
        <taxon>Homo</taxon>
    </lineage>
</organism>
<feature type="chain" id="PRO_0000191349" description="Transcription cofactor vestigial-like protein 2">
    <location>
        <begin position="1"/>
        <end position="317"/>
    </location>
</feature>
<feature type="region of interest" description="Disordered" evidence="2">
    <location>
        <begin position="41"/>
        <end position="76"/>
    </location>
</feature>
<feature type="region of interest" description="Disordered" evidence="2">
    <location>
        <begin position="108"/>
        <end position="128"/>
    </location>
</feature>
<feature type="region of interest" description="Disordered" evidence="2">
    <location>
        <begin position="191"/>
        <end position="214"/>
    </location>
</feature>
<feature type="region of interest" description="Disordered" evidence="2">
    <location>
        <begin position="253"/>
        <end position="293"/>
    </location>
</feature>
<feature type="compositionally biased region" description="Low complexity" evidence="2">
    <location>
        <begin position="44"/>
        <end position="57"/>
    </location>
</feature>
<feature type="compositionally biased region" description="Basic and acidic residues" evidence="2">
    <location>
        <begin position="63"/>
        <end position="76"/>
    </location>
</feature>
<feature type="compositionally biased region" description="Low complexity" evidence="2">
    <location>
        <begin position="108"/>
        <end position="120"/>
    </location>
</feature>
<feature type="compositionally biased region" description="Basic residues" evidence="2">
    <location>
        <begin position="196"/>
        <end position="206"/>
    </location>
</feature>
<feature type="compositionally biased region" description="Low complexity" evidence="2">
    <location>
        <begin position="272"/>
        <end position="292"/>
    </location>
</feature>
<feature type="splice variant" id="VSP_032166" description="In isoform 2." evidence="4 5">
    <location>
        <begin position="131"/>
        <end position="304"/>
    </location>
</feature>
<sequence>MSCLDVMYQVYGPPQPYFAAAYTPYHQKLAYYSKMQEAQECNASPSSSGSGSSSFSSQTPASIKEEEGSPEKERPPEAEYINSRCVLFTYFQGDISSVVDEHFSRALSQPSSYSPSCTSSKAPRSSGPWRDCSFPMSQRSFPASFWNSAYQAPVPPPLGSPLATAHSELPFAAADPYSPAALHGHLHQGATEPWHHAHPHHAHPHHPYALGGALGAQAAPYPRPAAVHEVYAPHFDPRYGPLLMPAASGRPARLATAPAPAPGSPPCELSGKGEPAGAAWAGPGGPFASPSGDVAQGLGLSVDSARRYSLCGASLLS</sequence>
<keyword id="KW-0025">Alternative splicing</keyword>
<keyword id="KW-0539">Nucleus</keyword>
<keyword id="KW-1267">Proteomics identification</keyword>
<keyword id="KW-1185">Reference proteome</keyword>
<keyword id="KW-0804">Transcription</keyword>
<keyword id="KW-0805">Transcription regulation</keyword>
<dbReference type="EMBL" id="AJ578053">
    <property type="protein sequence ID" value="CAE17331.1"/>
    <property type="molecule type" value="mRNA"/>
</dbReference>
<dbReference type="EMBL" id="AY056583">
    <property type="protein sequence ID" value="AAL17720.1"/>
    <property type="molecule type" value="mRNA"/>
</dbReference>
<dbReference type="EMBL" id="AK096878">
    <property type="protein sequence ID" value="BAC04881.1"/>
    <property type="molecule type" value="mRNA"/>
</dbReference>
<dbReference type="EMBL" id="Z98880">
    <property type="status" value="NOT_ANNOTATED_CDS"/>
    <property type="molecule type" value="Genomic_DNA"/>
</dbReference>
<dbReference type="EMBL" id="CH471051">
    <property type="protein sequence ID" value="EAW48211.1"/>
    <property type="molecule type" value="Genomic_DNA"/>
</dbReference>
<dbReference type="EMBL" id="BC069316">
    <property type="protein sequence ID" value="AAH69316.1"/>
    <property type="molecule type" value="mRNA"/>
</dbReference>
<dbReference type="EMBL" id="BC100798">
    <property type="protein sequence ID" value="AAI00799.1"/>
    <property type="molecule type" value="mRNA"/>
</dbReference>
<dbReference type="EMBL" id="BC100799">
    <property type="protein sequence ID" value="AAI00800.1"/>
    <property type="molecule type" value="mRNA"/>
</dbReference>
<dbReference type="EMBL" id="BC118545">
    <property type="protein sequence ID" value="AAI18546.1"/>
    <property type="molecule type" value="mRNA"/>
</dbReference>
<dbReference type="EMBL" id="BC118622">
    <property type="protein sequence ID" value="AAI18623.1"/>
    <property type="molecule type" value="mRNA"/>
</dbReference>
<dbReference type="CCDS" id="CCDS5114.1">
    <molecule id="Q8N8G2-2"/>
</dbReference>
<dbReference type="CCDS" id="CCDS5115.1">
    <molecule id="Q8N8G2-1"/>
</dbReference>
<dbReference type="RefSeq" id="NP_703154.1">
    <molecule id="Q8N8G2-2"/>
    <property type="nucleotide sequence ID" value="NM_153453.1"/>
</dbReference>
<dbReference type="RefSeq" id="NP_872586.1">
    <molecule id="Q8N8G2-1"/>
    <property type="nucleotide sequence ID" value="NM_182645.3"/>
</dbReference>
<dbReference type="BioGRID" id="128830">
    <property type="interactions" value="2"/>
</dbReference>
<dbReference type="FunCoup" id="Q8N8G2">
    <property type="interactions" value="919"/>
</dbReference>
<dbReference type="IntAct" id="Q8N8G2">
    <property type="interactions" value="1"/>
</dbReference>
<dbReference type="STRING" id="9606.ENSP00000320957"/>
<dbReference type="iPTMnet" id="Q8N8G2"/>
<dbReference type="PhosphoSitePlus" id="Q8N8G2"/>
<dbReference type="BioMuta" id="VGLL2"/>
<dbReference type="DMDM" id="50401602"/>
<dbReference type="MassIVE" id="Q8N8G2"/>
<dbReference type="PaxDb" id="9606-ENSP00000320957"/>
<dbReference type="PeptideAtlas" id="Q8N8G2"/>
<dbReference type="Antibodypedia" id="32540">
    <property type="antibodies" value="196 antibodies from 25 providers"/>
</dbReference>
<dbReference type="DNASU" id="245806"/>
<dbReference type="Ensembl" id="ENST00000326274.6">
    <molecule id="Q8N8G2-1"/>
    <property type="protein sequence ID" value="ENSP00000320957.5"/>
    <property type="gene ID" value="ENSG00000170162.14"/>
</dbReference>
<dbReference type="Ensembl" id="ENST00000352536.7">
    <molecule id="Q8N8G2-2"/>
    <property type="protein sequence ID" value="ENSP00000305405.5"/>
    <property type="gene ID" value="ENSG00000170162.14"/>
</dbReference>
<dbReference type="GeneID" id="245806"/>
<dbReference type="KEGG" id="hsa:245806"/>
<dbReference type="MANE-Select" id="ENST00000326274.6">
    <property type="protein sequence ID" value="ENSP00000320957.5"/>
    <property type="RefSeq nucleotide sequence ID" value="NM_182645.3"/>
    <property type="RefSeq protein sequence ID" value="NP_872586.1"/>
</dbReference>
<dbReference type="UCSC" id="uc003pxn.4">
    <molecule id="Q8N8G2-1"/>
    <property type="organism name" value="human"/>
</dbReference>
<dbReference type="AGR" id="HGNC:20232"/>
<dbReference type="CTD" id="245806"/>
<dbReference type="DisGeNET" id="245806"/>
<dbReference type="GeneCards" id="VGLL2"/>
<dbReference type="HGNC" id="HGNC:20232">
    <property type="gene designation" value="VGLL2"/>
</dbReference>
<dbReference type="HPA" id="ENSG00000170162">
    <property type="expression patterns" value="Tissue enriched (skeletal)"/>
</dbReference>
<dbReference type="MalaCards" id="VGLL2"/>
<dbReference type="MIM" id="609979">
    <property type="type" value="gene"/>
</dbReference>
<dbReference type="neXtProt" id="NX_Q8N8G2"/>
<dbReference type="OpenTargets" id="ENSG00000170162"/>
<dbReference type="PharmGKB" id="PA134881890"/>
<dbReference type="VEuPathDB" id="HostDB:ENSG00000170162"/>
<dbReference type="eggNOG" id="ENOG502QS1A">
    <property type="taxonomic scope" value="Eukaryota"/>
</dbReference>
<dbReference type="GeneTree" id="ENSGT00530000063353"/>
<dbReference type="HOGENOM" id="CLU_116340_0_0_1"/>
<dbReference type="InParanoid" id="Q8N8G2"/>
<dbReference type="OMA" id="HTELPFA"/>
<dbReference type="OrthoDB" id="10069705at2759"/>
<dbReference type="PAN-GO" id="Q8N8G2">
    <property type="GO annotations" value="2 GO annotations based on evolutionary models"/>
</dbReference>
<dbReference type="PhylomeDB" id="Q8N8G2"/>
<dbReference type="TreeFam" id="TF326340"/>
<dbReference type="PathwayCommons" id="Q8N8G2"/>
<dbReference type="SignaLink" id="Q8N8G2"/>
<dbReference type="BioGRID-ORCS" id="245806">
    <property type="hits" value="12 hits in 1149 CRISPR screens"/>
</dbReference>
<dbReference type="GenomeRNAi" id="245806"/>
<dbReference type="Pharos" id="Q8N8G2">
    <property type="development level" value="Tbio"/>
</dbReference>
<dbReference type="PRO" id="PR:Q8N8G2"/>
<dbReference type="Proteomes" id="UP000005640">
    <property type="component" value="Chromosome 6"/>
</dbReference>
<dbReference type="RNAct" id="Q8N8G2">
    <property type="molecule type" value="protein"/>
</dbReference>
<dbReference type="Bgee" id="ENSG00000170162">
    <property type="expression patterns" value="Expressed in skeletal muscle tissue of rectus abdominis and 74 other cell types or tissues"/>
</dbReference>
<dbReference type="GO" id="GO:0005737">
    <property type="term" value="C:cytoplasm"/>
    <property type="evidence" value="ECO:0007669"/>
    <property type="project" value="Ensembl"/>
</dbReference>
<dbReference type="GO" id="GO:0005634">
    <property type="term" value="C:nucleus"/>
    <property type="evidence" value="ECO:0000318"/>
    <property type="project" value="GO_Central"/>
</dbReference>
<dbReference type="GO" id="GO:0003713">
    <property type="term" value="F:transcription coactivator activity"/>
    <property type="evidence" value="ECO:0007669"/>
    <property type="project" value="Ensembl"/>
</dbReference>
<dbReference type="GO" id="GO:0045944">
    <property type="term" value="P:positive regulation of transcription by RNA polymerase II"/>
    <property type="evidence" value="ECO:0007669"/>
    <property type="project" value="Ensembl"/>
</dbReference>
<dbReference type="GO" id="GO:0006357">
    <property type="term" value="P:regulation of transcription by RNA polymerase II"/>
    <property type="evidence" value="ECO:0000318"/>
    <property type="project" value="GO_Central"/>
</dbReference>
<dbReference type="GO" id="GO:0007519">
    <property type="term" value="P:skeletal muscle tissue development"/>
    <property type="evidence" value="ECO:0007669"/>
    <property type="project" value="Ensembl"/>
</dbReference>
<dbReference type="InterPro" id="IPR011520">
    <property type="entry name" value="Vg_fam"/>
</dbReference>
<dbReference type="PANTHER" id="PTHR15950">
    <property type="entry name" value="TRANSCRIPTION COFACTOR VESTIGIAL-LIKE PROTEIN"/>
    <property type="match status" value="1"/>
</dbReference>
<dbReference type="PANTHER" id="PTHR15950:SF17">
    <property type="entry name" value="TRANSCRIPTION COFACTOR VESTIGIAL-LIKE PROTEIN 2"/>
    <property type="match status" value="1"/>
</dbReference>
<dbReference type="Pfam" id="PF07545">
    <property type="entry name" value="Vg_Tdu"/>
    <property type="match status" value="1"/>
</dbReference>
<name>VGLL2_HUMAN</name>